<comment type="function">
    <text evidence="1">Required for the development of induced thermotolerance.</text>
</comment>
<comment type="similarity">
    <text evidence="4">Belongs to the ClpA/ClpB family. ClpL subfamily.</text>
</comment>
<reference key="1">
    <citation type="journal article" date="2007" name="PLoS ONE">
        <title>Molecular correlates of host specialization in Staphylococcus aureus.</title>
        <authorList>
            <person name="Herron-Olson L."/>
            <person name="Fitzgerald J.R."/>
            <person name="Musser J.M."/>
            <person name="Kapur V."/>
        </authorList>
    </citation>
    <scope>NUCLEOTIDE SEQUENCE [LARGE SCALE GENOMIC DNA]</scope>
    <source>
        <strain>bovine RF122 / ET3-1</strain>
    </source>
</reference>
<keyword id="KW-0067">ATP-binding</keyword>
<keyword id="KW-0143">Chaperone</keyword>
<keyword id="KW-0547">Nucleotide-binding</keyword>
<protein>
    <recommendedName>
        <fullName>ATP-dependent Clp protease ATP-binding subunit ClpL</fullName>
    </recommendedName>
</protein>
<organism>
    <name type="scientific">Staphylococcus aureus (strain bovine RF122 / ET3-1)</name>
    <dbReference type="NCBI Taxonomy" id="273036"/>
    <lineage>
        <taxon>Bacteria</taxon>
        <taxon>Bacillati</taxon>
        <taxon>Bacillota</taxon>
        <taxon>Bacilli</taxon>
        <taxon>Bacillales</taxon>
        <taxon>Staphylococcaceae</taxon>
        <taxon>Staphylococcus</taxon>
    </lineage>
</organism>
<feature type="chain" id="PRO_0000269496" description="ATP-dependent Clp protease ATP-binding subunit ClpL">
    <location>
        <begin position="1"/>
        <end position="702"/>
    </location>
</feature>
<feature type="domain" description="UVR">
    <location>
        <begin position="336"/>
        <end position="371"/>
    </location>
</feature>
<feature type="region of interest" description="Disordered" evidence="3">
    <location>
        <begin position="46"/>
        <end position="80"/>
    </location>
</feature>
<feature type="region of interest" description="I">
    <location>
        <begin position="81"/>
        <end position="332"/>
    </location>
</feature>
<feature type="region of interest" description="II">
    <location>
        <begin position="383"/>
        <end position="575"/>
    </location>
</feature>
<feature type="compositionally biased region" description="Polar residues" evidence="3">
    <location>
        <begin position="46"/>
        <end position="55"/>
    </location>
</feature>
<feature type="compositionally biased region" description="Low complexity" evidence="3">
    <location>
        <begin position="56"/>
        <end position="74"/>
    </location>
</feature>
<feature type="binding site" evidence="2">
    <location>
        <begin position="126"/>
        <end position="133"/>
    </location>
    <ligand>
        <name>ATP</name>
        <dbReference type="ChEBI" id="CHEBI:30616"/>
    </ligand>
</feature>
<feature type="binding site" evidence="2">
    <location>
        <begin position="457"/>
        <end position="464"/>
    </location>
    <ligand>
        <name>ATP</name>
        <dbReference type="ChEBI" id="CHEBI:30616"/>
    </ligand>
</feature>
<accession>Q2YWB1</accession>
<gene>
    <name type="primary">clpL</name>
    <name type="ordered locus">SAB2423</name>
</gene>
<proteinExistence type="inferred from homology"/>
<name>CLPL_STAAB</name>
<sequence>MNNNFFNSDFDSILRRMMQDMQNSNQTSNKKYYINGKEVSQEELAQFTQQGGNHSAEQSAQAFQQAALRQQGQQSGNGNYLEQIGRNLTQEARDGLLDPVIGRDKEIQETAEVLSRRTKNNPILVGEAGVGKTAIVEGLAQAIVEGNVPAAIKDKEIISIDISSLEAGTQYRGAFEENIQKLVEGVKSSQNAVLFFDEIHQIIGSGATGSDSGSKGLSDILKPALSRGEISIIGATTQDEYRNNILKDAALTRRFNEVLVNEPSAKDTVEILKGIREKFETHHQVKLPDDVLKACVDLSIQYIPQRLLPDKAIDVLDITAAHLSAQSPAIDKVATEKRISELEHDKRKAVSAEEYKKADDIQNEIKSLQDKLENSNGEHTAVATVHDISDTIQRLTGIPVSQMDANDIERLKNISSRLRSKIIGQDKAVEMVSRAIRRNRAGFDDGNRPIGSFLFVGPTGVGKTELAKQLAIDLFGNKEALIRLDMSEYSDTTAISKMIGTTAGYVGYDDNSNTLTEKVRRNPYSVILFDEIEKANPQILTLLLQVMDDGNLTDGQGNVINFKNTIIICTSNAGFGNGTDQEYDDIMQEMKKFFRPEFLNRFNGIVEFLHLDKDALQDIVNLLLDDVQVTLDKKGITMNVSQDAKDWLIEEGYDEELGARPLRRIVEQQVRDKITDYYLDHTDVKHVDLDIEDNELVVKGKS</sequence>
<dbReference type="EMBL" id="AJ938182">
    <property type="protein sequence ID" value="CAI82111.1"/>
    <property type="molecule type" value="Genomic_DNA"/>
</dbReference>
<dbReference type="RefSeq" id="WP_001063340.1">
    <property type="nucleotide sequence ID" value="NC_007622.1"/>
</dbReference>
<dbReference type="SMR" id="Q2YWB1"/>
<dbReference type="KEGG" id="sab:SAB2423"/>
<dbReference type="HOGENOM" id="CLU_005070_4_3_9"/>
<dbReference type="GO" id="GO:0005737">
    <property type="term" value="C:cytoplasm"/>
    <property type="evidence" value="ECO:0007669"/>
    <property type="project" value="TreeGrafter"/>
</dbReference>
<dbReference type="GO" id="GO:0005524">
    <property type="term" value="F:ATP binding"/>
    <property type="evidence" value="ECO:0007669"/>
    <property type="project" value="UniProtKB-KW"/>
</dbReference>
<dbReference type="GO" id="GO:0016887">
    <property type="term" value="F:ATP hydrolysis activity"/>
    <property type="evidence" value="ECO:0007669"/>
    <property type="project" value="InterPro"/>
</dbReference>
<dbReference type="GO" id="GO:0034605">
    <property type="term" value="P:cellular response to heat"/>
    <property type="evidence" value="ECO:0007669"/>
    <property type="project" value="TreeGrafter"/>
</dbReference>
<dbReference type="CDD" id="cd00009">
    <property type="entry name" value="AAA"/>
    <property type="match status" value="1"/>
</dbReference>
<dbReference type="CDD" id="cd19499">
    <property type="entry name" value="RecA-like_ClpB_Hsp104-like"/>
    <property type="match status" value="1"/>
</dbReference>
<dbReference type="FunFam" id="3.40.50.300:FF:000025">
    <property type="entry name" value="ATP-dependent Clp protease subunit"/>
    <property type="match status" value="1"/>
</dbReference>
<dbReference type="Gene3D" id="1.10.8.60">
    <property type="match status" value="2"/>
</dbReference>
<dbReference type="Gene3D" id="3.40.50.300">
    <property type="entry name" value="P-loop containing nucleotide triphosphate hydrolases"/>
    <property type="match status" value="2"/>
</dbReference>
<dbReference type="Gene3D" id="4.10.860.10">
    <property type="entry name" value="UVR domain"/>
    <property type="match status" value="1"/>
</dbReference>
<dbReference type="InterPro" id="IPR003593">
    <property type="entry name" value="AAA+_ATPase"/>
</dbReference>
<dbReference type="InterPro" id="IPR003959">
    <property type="entry name" value="ATPase_AAA_core"/>
</dbReference>
<dbReference type="InterPro" id="IPR019489">
    <property type="entry name" value="Clp_ATPase_C"/>
</dbReference>
<dbReference type="InterPro" id="IPR001270">
    <property type="entry name" value="ClpA/B"/>
</dbReference>
<dbReference type="InterPro" id="IPR041546">
    <property type="entry name" value="ClpA/ClpB_AAA_lid"/>
</dbReference>
<dbReference type="InterPro" id="IPR050130">
    <property type="entry name" value="ClpA_ClpB"/>
</dbReference>
<dbReference type="InterPro" id="IPR027417">
    <property type="entry name" value="P-loop_NTPase"/>
</dbReference>
<dbReference type="PANTHER" id="PTHR11638">
    <property type="entry name" value="ATP-DEPENDENT CLP PROTEASE"/>
    <property type="match status" value="1"/>
</dbReference>
<dbReference type="PANTHER" id="PTHR11638:SF188">
    <property type="entry name" value="ATP-DEPENDENT CLP PROTEASE ATP-BINDING SUBUNIT CLPL"/>
    <property type="match status" value="1"/>
</dbReference>
<dbReference type="Pfam" id="PF00004">
    <property type="entry name" value="AAA"/>
    <property type="match status" value="1"/>
</dbReference>
<dbReference type="Pfam" id="PF07724">
    <property type="entry name" value="AAA_2"/>
    <property type="match status" value="1"/>
</dbReference>
<dbReference type="Pfam" id="PF17871">
    <property type="entry name" value="AAA_lid_9"/>
    <property type="match status" value="1"/>
</dbReference>
<dbReference type="Pfam" id="PF10431">
    <property type="entry name" value="ClpB_D2-small"/>
    <property type="match status" value="1"/>
</dbReference>
<dbReference type="PRINTS" id="PR00300">
    <property type="entry name" value="CLPPROTEASEA"/>
</dbReference>
<dbReference type="SMART" id="SM00382">
    <property type="entry name" value="AAA"/>
    <property type="match status" value="2"/>
</dbReference>
<dbReference type="SMART" id="SM01086">
    <property type="entry name" value="ClpB_D2-small"/>
    <property type="match status" value="1"/>
</dbReference>
<dbReference type="SUPFAM" id="SSF52540">
    <property type="entry name" value="P-loop containing nucleoside triphosphate hydrolases"/>
    <property type="match status" value="2"/>
</dbReference>
<evidence type="ECO:0000250" key="1"/>
<evidence type="ECO:0000255" key="2"/>
<evidence type="ECO:0000256" key="3">
    <source>
        <dbReference type="SAM" id="MobiDB-lite"/>
    </source>
</evidence>
<evidence type="ECO:0000305" key="4"/>